<dbReference type="EMBL" id="BA000022">
    <property type="protein sequence ID" value="BAA17871.1"/>
    <property type="molecule type" value="Genomic_DNA"/>
</dbReference>
<dbReference type="PIR" id="S74910">
    <property type="entry name" value="S74910"/>
</dbReference>
<dbReference type="SMR" id="P73817"/>
<dbReference type="IntAct" id="P73817">
    <property type="interactions" value="2"/>
</dbReference>
<dbReference type="STRING" id="1148.gene:10498740"/>
<dbReference type="PaxDb" id="1148-1652953"/>
<dbReference type="EnsemblBacteria" id="BAA17871">
    <property type="protein sequence ID" value="BAA17871"/>
    <property type="gene ID" value="BAA17871"/>
</dbReference>
<dbReference type="KEGG" id="syn:sll1951"/>
<dbReference type="eggNOG" id="COG2931">
    <property type="taxonomic scope" value="Bacteria"/>
</dbReference>
<dbReference type="InParanoid" id="P73817"/>
<dbReference type="PhylomeDB" id="P73817"/>
<dbReference type="Proteomes" id="UP000001425">
    <property type="component" value="Chromosome"/>
</dbReference>
<dbReference type="GO" id="GO:0005576">
    <property type="term" value="C:extracellular region"/>
    <property type="evidence" value="ECO:0007669"/>
    <property type="project" value="UniProtKB-KW"/>
</dbReference>
<dbReference type="GO" id="GO:0030115">
    <property type="term" value="C:S-layer"/>
    <property type="evidence" value="ECO:0007669"/>
    <property type="project" value="UniProtKB-SubCell"/>
</dbReference>
<dbReference type="GO" id="GO:0005509">
    <property type="term" value="F:calcium ion binding"/>
    <property type="evidence" value="ECO:0007669"/>
    <property type="project" value="InterPro"/>
</dbReference>
<dbReference type="Gene3D" id="2.150.10.10">
    <property type="entry name" value="Serralysin-like metalloprotease, C-terminal"/>
    <property type="match status" value="3"/>
</dbReference>
<dbReference type="InterPro" id="IPR048165">
    <property type="entry name" value="Bluetail_dom"/>
</dbReference>
<dbReference type="InterPro" id="IPR018511">
    <property type="entry name" value="Hemolysin-typ_Ca-bd_CS"/>
</dbReference>
<dbReference type="InterPro" id="IPR001343">
    <property type="entry name" value="Hemolysn_Ca-bd"/>
</dbReference>
<dbReference type="InterPro" id="IPR050557">
    <property type="entry name" value="RTX_toxin/Mannuronan_C5-epim"/>
</dbReference>
<dbReference type="InterPro" id="IPR011049">
    <property type="entry name" value="Serralysin-like_metalloprot_C"/>
</dbReference>
<dbReference type="NCBIfam" id="NF041519">
    <property type="entry name" value="bluetail"/>
    <property type="match status" value="1"/>
</dbReference>
<dbReference type="PANTHER" id="PTHR38340">
    <property type="entry name" value="S-LAYER PROTEIN"/>
    <property type="match status" value="1"/>
</dbReference>
<dbReference type="PANTHER" id="PTHR38340:SF1">
    <property type="entry name" value="S-LAYER PROTEIN"/>
    <property type="match status" value="1"/>
</dbReference>
<dbReference type="Pfam" id="PF00353">
    <property type="entry name" value="HemolysinCabind"/>
    <property type="match status" value="6"/>
</dbReference>
<dbReference type="PRINTS" id="PR00313">
    <property type="entry name" value="CABNDNGRPT"/>
</dbReference>
<dbReference type="SUPFAM" id="SSF51120">
    <property type="entry name" value="beta-Roll"/>
    <property type="match status" value="2"/>
</dbReference>
<dbReference type="PROSITE" id="PS00330">
    <property type="entry name" value="HEMOLYSIN_CALCIUM"/>
    <property type="match status" value="2"/>
</dbReference>
<accession>P73817</accession>
<evidence type="ECO:0000256" key="1">
    <source>
        <dbReference type="SAM" id="MobiDB-lite"/>
    </source>
</evidence>
<evidence type="ECO:0000269" key="2">
    <source>
    </source>
</evidence>
<evidence type="ECO:0000269" key="3">
    <source>
    </source>
</evidence>
<evidence type="ECO:0000303" key="4">
    <source>
    </source>
</evidence>
<evidence type="ECO:0000303" key="5">
    <source>
    </source>
</evidence>
<evidence type="ECO:0000312" key="6">
    <source>
        <dbReference type="EMBL" id="BAA17871.1"/>
    </source>
</evidence>
<protein>
    <recommendedName>
        <fullName evidence="5">S-layer protein</fullName>
    </recommendedName>
    <alternativeName>
        <fullName evidence="4">Hemolysin-like protein</fullName>
        <shortName evidence="4">HLP</shortName>
    </alternativeName>
</protein>
<feature type="chain" id="PRO_0000444329" description="S-layer protein">
    <location>
        <begin position="1"/>
        <end position="1741"/>
    </location>
</feature>
<feature type="region of interest" description="Disordered" evidence="1">
    <location>
        <begin position="894"/>
        <end position="913"/>
    </location>
</feature>
<feature type="compositionally biased region" description="Polar residues" evidence="1">
    <location>
        <begin position="894"/>
        <end position="904"/>
    </location>
</feature>
<proteinExistence type="evidence at protein level"/>
<comment type="function">
    <text evidence="2 3">S-layer protein. The S-layer is a paracrystalline mono-layered assembly of proteins which coats the surface of bacteria (PubMed:24078613). Under laboratory conditions, has a supportive but not a critical role in the function of the cyanobacterium (PubMed:24078613). Shows no apparent hemolytic activity against sheep erythrocytes, however, a slight hemolytic activity is detected during the conformational change caused by the rebinding of Ca(2+) (PubMed:16672608).</text>
</comment>
<comment type="subcellular location">
    <subcellularLocation>
        <location evidence="2 3">Secreted</location>
        <location evidence="2 3">Cell wall</location>
        <location evidence="2 3">S-layer</location>
    </subcellularLocation>
</comment>
<comment type="domain">
    <text evidence="2">Contains GGXGXDXUX nonapeptide motifs, which are found in members of the repeat in toxin (RTX) protein family, and which are implicated in Ca(2+) binding. Binds Ca(2+) and shows Ca(2+)-induced reversible conformational changes.</text>
</comment>
<comment type="PTM">
    <text evidence="2 3">Glycosylated.</text>
</comment>
<comment type="disruption phenotype">
    <text evidence="3">The deletion mutant has similar pigmentation, but a more flat, spread morphology and a shiny surface. It displays a smooth lipopolysaccharide surface as its most peripheral layer. Viability of the mutant is reduced upon exposure to lysozyme treatment and hypo-osmotic stress.</text>
</comment>
<reference key="1">
    <citation type="journal article" date="1996" name="DNA Res.">
        <title>Sequence analysis of the genome of the unicellular cyanobacterium Synechocystis sp. strain PCC6803. II. Sequence determination of the entire genome and assignment of potential protein-coding regions.</title>
        <authorList>
            <person name="Kaneko T."/>
            <person name="Sato S."/>
            <person name="Kotani H."/>
            <person name="Tanaka A."/>
            <person name="Asamizu E."/>
            <person name="Nakamura Y."/>
            <person name="Miyajima N."/>
            <person name="Hirosawa M."/>
            <person name="Sugiura M."/>
            <person name="Sasamoto S."/>
            <person name="Kimura T."/>
            <person name="Hosouchi T."/>
            <person name="Matsuno A."/>
            <person name="Muraki A."/>
            <person name="Nakazaki N."/>
            <person name="Naruo K."/>
            <person name="Okumura S."/>
            <person name="Shimpo S."/>
            <person name="Takeuchi C."/>
            <person name="Wada T."/>
            <person name="Watanabe A."/>
            <person name="Yamada M."/>
            <person name="Yasuda M."/>
            <person name="Tabata S."/>
        </authorList>
    </citation>
    <scope>NUCLEOTIDE SEQUENCE [LARGE SCALE GENOMIC DNA]</scope>
    <source>
        <strain>ATCC 27184 / PCC 6803 / Kazusa</strain>
    </source>
</reference>
<reference key="2">
    <citation type="journal article" date="2006" name="J. Bacteriol.">
        <title>Purification and characterization of a hemolysin-like protein, Sll1951, a nontoxic member of the RTX protein family from the Cyanobacterium Synechocystis sp. strain PCC 6803.</title>
        <authorList>
            <person name="Sakiyama T."/>
            <person name="Ueno H."/>
            <person name="Homma H."/>
            <person name="Numata O."/>
            <person name="Kuwabara T."/>
        </authorList>
    </citation>
    <scope>FUNCTION</scope>
    <scope>SUBCELLULAR LOCATION</scope>
    <scope>DOMAIN</scope>
    <scope>GLYCOSYLATION</scope>
    <source>
        <strain>ATCC 27184 / PCC 6803 / Kazusa</strain>
    </source>
</reference>
<reference key="3">
    <citation type="journal article" date="2013" name="J. Bacteriol.">
        <title>The sll1951 gene encodes the surface layer protein of Synechocystis sp. strain PCC 6803.</title>
        <authorList>
            <person name="Trautner C."/>
            <person name="Vermaas W.F."/>
        </authorList>
    </citation>
    <scope>FUNCTION</scope>
    <scope>SUBCELLULAR LOCATION</scope>
    <scope>GLYCOSYLATION</scope>
    <scope>DISRUPTION PHENOTYPE</scope>
    <scope>IDENTIFICATION BY MASS SPECTROMETRY</scope>
    <source>
        <strain>ATCC 27184 / PCC 6803 / Kazusa</strain>
    </source>
</reference>
<gene>
    <name evidence="6" type="ordered locus">sll1951</name>
</gene>
<organism>
    <name type="scientific">Synechocystis sp. (strain ATCC 27184 / PCC 6803 / Kazusa)</name>
    <dbReference type="NCBI Taxonomy" id="1111708"/>
    <lineage>
        <taxon>Bacteria</taxon>
        <taxon>Bacillati</taxon>
        <taxon>Cyanobacteriota</taxon>
        <taxon>Cyanophyceae</taxon>
        <taxon>Synechococcales</taxon>
        <taxon>Merismopediaceae</taxon>
        <taxon>Synechocystis</taxon>
    </lineage>
</organism>
<keyword id="KW-0134">Cell wall</keyword>
<keyword id="KW-0325">Glycoprotein</keyword>
<keyword id="KW-1185">Reference proteome</keyword>
<keyword id="KW-0701">S-layer</keyword>
<keyword id="KW-0964">Secreted</keyword>
<name>SLAP_SYNY3</name>
<sequence length="1741" mass="178261">MALSPNVIAALQIMYTGRGVSASDLNWWATDGANITYAEAVALFASSPDAAIKYPFFQAPQTADKRQYVAQVFANLYNIDINDTSLVPTEELDYWINWLSLSPDNYLDFPNALNNASAAAGLTDRLEALTNKADVSLSYTEALSTAGVNTFTEAQYAEAAGIIATVDDTNASVLAAEAQIVEIAASLSVFTIAQAQATPNLPPAYTISDTADNLIAGADDPVVTGANNVIANQSPAAPLSVEDANILLATADELAAGVTWDILDTAADVLAGGAAVSGAASVGITDIVDVATASQLLALGNFDGVYAIADTSANIVADPGVSGGATAITLSDPDVPVSVASATFLQGLGIPVGPSYIVEDTSANILAALSTPAIVNAAEVIVNNTDVPLSVAQAEDLLSLPNLNAGFTYIIADTLDNLSAAPSTLLDGAVSYSLTNTNPDLGVITEAEAVIVNGATNASDFNFLVADVILTPQADIRSGNSFLSVAVVEGGSIFNTLNSNDRLTGTGEDPTLSLTWQEATFGNINTIFPVLDGIETLVATLIENDLTLVSNDFDVVGQGFITGLKNVAASGTKGGDLELINLQTALETVSVTNYFFGDDVSFSIADPELAGDNDLLLLTVDQVTEDGPDVTSIKISDFSGNGGYETLGLTSGVTTSSKGNTNTVDIEGIVAVESIGITGIENLTLSTSLIGSVVKVDATGSALIPEFEGREVFTGDLKAFFDDRPGGDITFLSGSGNDEISIARDAFTLSEDLKDVISKGHILDGGAGNDELTITGDAFSDTDAGHTVIGGEGNDSILLTGVAEGPIAGHVVNSFDLINEVGGAGDDDINISGDAIGDSAGHVVFGGAGEDDIFIGFDKTLAVSGNGAALGVDLAGHVVFAGDDDDTVRITGDSFTSDSANGSGHSVEGGTGDDLIEISGDALTADPDSETIANPFFDDSEPSDLDLFIAADQPIPTTEEQYQVLLAQLGLPADYNPRNFIRGVAAISGAHTVRGGEGNDVILFGPIAGEPGNGDGQHLAFGDEGDDFIEMTGIGSVEFNGGAGDDTLVGGDGDPILGFGNDILNGDEGNDFLFGGKGNDNLQGGEGDDIMSGGEGDDFFFVDAGFDVIEDLGDANSETGDQFQVSEDAEAEIRVVQDWEATGLTFNLGIATLTIENPGGGSVDLSASNVPPNTNGYTVIGNIGDDEIIGSRDDDSIFGGRGEDSIAGLGGDDIIEGNDDDDFISGDSLLLPLLPLEEILPFGNDDIDAGSGNDVIAGDLLVVTGDDIDLNLFNGGKDTIEAGLGSDITVGDWSIGAFGDIDLNASLERTAIGGDDTITTKQGDNGIVFPIGQVAIDNFLVGDLAAAVDGVGNDIFLTETLTVIGGDDTMTGADGLDVIVGDVGLFGFEFNDSEINLTNFKLGQVNGSTVSAGDDSITGEGGNDILVGDLFVGVINNNGIIIDGGKGFQLGKDGTTSFIGGDDSISGGDGNDFLAGDFVLVDQLSAPFDPLDPNDWTFVNPYATLQGQAGDSKAQAAQAAINLAQLRLEFRAVGGDDELVGGRGNDTFYGGLGADTIDIGNDVTVGGVGVNGANEIWYMNGAFENAAVNGANVDNITGFNVNNDKFVFAAGANNFLSGDATSGLAVQRVLNLQAGNTVFNLNDPILNASANNINDVFLAVNADNSVGASLSFSLLPGLPSLVEMQQINVSSGALAGREFLFINNGVAAVSSQDDFLVELTGISGTFGLDLTPNFEVREFYA</sequence>